<feature type="chain" id="PRO_1000071493" description="Triosephosphate isomerase">
    <location>
        <begin position="1"/>
        <end position="265"/>
    </location>
</feature>
<feature type="active site" description="Electrophile" evidence="1">
    <location>
        <position position="103"/>
    </location>
</feature>
<feature type="active site" description="Proton acceptor" evidence="1">
    <location>
        <position position="182"/>
    </location>
</feature>
<feature type="binding site" evidence="1">
    <location>
        <begin position="8"/>
        <end position="10"/>
    </location>
    <ligand>
        <name>substrate</name>
    </ligand>
</feature>
<feature type="binding site" evidence="1">
    <location>
        <position position="188"/>
    </location>
    <ligand>
        <name>substrate</name>
    </ligand>
</feature>
<feature type="binding site" evidence="1">
    <location>
        <position position="226"/>
    </location>
    <ligand>
        <name>substrate</name>
    </ligand>
</feature>
<feature type="binding site" evidence="1">
    <location>
        <begin position="247"/>
        <end position="248"/>
    </location>
    <ligand>
        <name>substrate</name>
    </ligand>
</feature>
<reference key="1">
    <citation type="submission" date="2007-05" db="EMBL/GenBank/DDBJ databases">
        <title>Complete sequence of chromosome of Psychrobacter sp. PRwf-1.</title>
        <authorList>
            <consortium name="US DOE Joint Genome Institute"/>
            <person name="Copeland A."/>
            <person name="Lucas S."/>
            <person name="Lapidus A."/>
            <person name="Barry K."/>
            <person name="Detter J.C."/>
            <person name="Glavina del Rio T."/>
            <person name="Hammon N."/>
            <person name="Israni S."/>
            <person name="Dalin E."/>
            <person name="Tice H."/>
            <person name="Pitluck S."/>
            <person name="Chain P."/>
            <person name="Malfatti S."/>
            <person name="Shin M."/>
            <person name="Vergez L."/>
            <person name="Schmutz J."/>
            <person name="Larimer F."/>
            <person name="Land M."/>
            <person name="Hauser L."/>
            <person name="Kyrpides N."/>
            <person name="Kim E."/>
            <person name="Tiedje J."/>
            <person name="Richardson P."/>
        </authorList>
    </citation>
    <scope>NUCLEOTIDE SEQUENCE [LARGE SCALE GENOMIC DNA]</scope>
    <source>
        <strain>PRwf-1</strain>
    </source>
</reference>
<sequence length="265" mass="28865">MKSWVIGNWKLNPTSLEQVQHLVTDLVEGVDAQTRSMDNCHLMLAPSFLHLSPVQQALNANSSTLKLAAQDVSALSAESGAYTGDVSAKQLKDMGVQWVIVGHSERRQYYKESNAVLLKKLLNSAEQGLGVILCIGESESDFEAGHTEQVLDEELQVIADFLQQLKPEQAGYAEQNLIIAYEPVWAIGTGKVPSVEQVTQIHRFIRQQLHSFDNKLDTTPVIYGGSVKPENAADFAASDQINGVLVGGAALQADSFLAIAKCFNN</sequence>
<comment type="function">
    <text evidence="1">Involved in the gluconeogenesis. Catalyzes stereospecifically the conversion of dihydroxyacetone phosphate (DHAP) to D-glyceraldehyde-3-phosphate (G3P).</text>
</comment>
<comment type="catalytic activity">
    <reaction evidence="1">
        <text>D-glyceraldehyde 3-phosphate = dihydroxyacetone phosphate</text>
        <dbReference type="Rhea" id="RHEA:18585"/>
        <dbReference type="ChEBI" id="CHEBI:57642"/>
        <dbReference type="ChEBI" id="CHEBI:59776"/>
        <dbReference type="EC" id="5.3.1.1"/>
    </reaction>
</comment>
<comment type="pathway">
    <text evidence="1">Carbohydrate biosynthesis; gluconeogenesis.</text>
</comment>
<comment type="pathway">
    <text evidence="1">Carbohydrate degradation; glycolysis; D-glyceraldehyde 3-phosphate from glycerone phosphate: step 1/1.</text>
</comment>
<comment type="subunit">
    <text evidence="1">Homodimer.</text>
</comment>
<comment type="subcellular location">
    <subcellularLocation>
        <location evidence="1">Cytoplasm</location>
    </subcellularLocation>
</comment>
<comment type="similarity">
    <text evidence="1">Belongs to the triosephosphate isomerase family.</text>
</comment>
<dbReference type="EC" id="5.3.1.1" evidence="1"/>
<dbReference type="EMBL" id="CP000713">
    <property type="protein sequence ID" value="ABQ93112.1"/>
    <property type="molecule type" value="Genomic_DNA"/>
</dbReference>
<dbReference type="SMR" id="A5WBS1"/>
<dbReference type="STRING" id="349106.PsycPRwf_0152"/>
<dbReference type="KEGG" id="prw:PsycPRwf_0152"/>
<dbReference type="eggNOG" id="COG0149">
    <property type="taxonomic scope" value="Bacteria"/>
</dbReference>
<dbReference type="HOGENOM" id="CLU_024251_2_1_6"/>
<dbReference type="UniPathway" id="UPA00109">
    <property type="reaction ID" value="UER00189"/>
</dbReference>
<dbReference type="UniPathway" id="UPA00138"/>
<dbReference type="GO" id="GO:0005829">
    <property type="term" value="C:cytosol"/>
    <property type="evidence" value="ECO:0007669"/>
    <property type="project" value="TreeGrafter"/>
</dbReference>
<dbReference type="GO" id="GO:0004807">
    <property type="term" value="F:triose-phosphate isomerase activity"/>
    <property type="evidence" value="ECO:0007669"/>
    <property type="project" value="UniProtKB-UniRule"/>
</dbReference>
<dbReference type="GO" id="GO:0006094">
    <property type="term" value="P:gluconeogenesis"/>
    <property type="evidence" value="ECO:0007669"/>
    <property type="project" value="UniProtKB-UniRule"/>
</dbReference>
<dbReference type="GO" id="GO:0046166">
    <property type="term" value="P:glyceraldehyde-3-phosphate biosynthetic process"/>
    <property type="evidence" value="ECO:0007669"/>
    <property type="project" value="TreeGrafter"/>
</dbReference>
<dbReference type="GO" id="GO:0019563">
    <property type="term" value="P:glycerol catabolic process"/>
    <property type="evidence" value="ECO:0007669"/>
    <property type="project" value="TreeGrafter"/>
</dbReference>
<dbReference type="GO" id="GO:0006096">
    <property type="term" value="P:glycolytic process"/>
    <property type="evidence" value="ECO:0007669"/>
    <property type="project" value="UniProtKB-UniRule"/>
</dbReference>
<dbReference type="CDD" id="cd00311">
    <property type="entry name" value="TIM"/>
    <property type="match status" value="1"/>
</dbReference>
<dbReference type="FunFam" id="3.20.20.70:FF:000016">
    <property type="entry name" value="Triosephosphate isomerase"/>
    <property type="match status" value="1"/>
</dbReference>
<dbReference type="Gene3D" id="3.20.20.70">
    <property type="entry name" value="Aldolase class I"/>
    <property type="match status" value="1"/>
</dbReference>
<dbReference type="HAMAP" id="MF_00147_B">
    <property type="entry name" value="TIM_B"/>
    <property type="match status" value="1"/>
</dbReference>
<dbReference type="InterPro" id="IPR013785">
    <property type="entry name" value="Aldolase_TIM"/>
</dbReference>
<dbReference type="InterPro" id="IPR035990">
    <property type="entry name" value="TIM_sf"/>
</dbReference>
<dbReference type="InterPro" id="IPR022896">
    <property type="entry name" value="TrioseP_Isoase_bac/euk"/>
</dbReference>
<dbReference type="InterPro" id="IPR000652">
    <property type="entry name" value="Triosephosphate_isomerase"/>
</dbReference>
<dbReference type="InterPro" id="IPR020861">
    <property type="entry name" value="Triosephosphate_isomerase_AS"/>
</dbReference>
<dbReference type="NCBIfam" id="TIGR00419">
    <property type="entry name" value="tim"/>
    <property type="match status" value="1"/>
</dbReference>
<dbReference type="PANTHER" id="PTHR21139">
    <property type="entry name" value="TRIOSEPHOSPHATE ISOMERASE"/>
    <property type="match status" value="1"/>
</dbReference>
<dbReference type="PANTHER" id="PTHR21139:SF42">
    <property type="entry name" value="TRIOSEPHOSPHATE ISOMERASE"/>
    <property type="match status" value="1"/>
</dbReference>
<dbReference type="Pfam" id="PF00121">
    <property type="entry name" value="TIM"/>
    <property type="match status" value="1"/>
</dbReference>
<dbReference type="SUPFAM" id="SSF51351">
    <property type="entry name" value="Triosephosphate isomerase (TIM)"/>
    <property type="match status" value="1"/>
</dbReference>
<dbReference type="PROSITE" id="PS00171">
    <property type="entry name" value="TIM_1"/>
    <property type="match status" value="1"/>
</dbReference>
<dbReference type="PROSITE" id="PS51440">
    <property type="entry name" value="TIM_2"/>
    <property type="match status" value="1"/>
</dbReference>
<organism>
    <name type="scientific">Psychrobacter sp. (strain PRwf-1)</name>
    <dbReference type="NCBI Taxonomy" id="349106"/>
    <lineage>
        <taxon>Bacteria</taxon>
        <taxon>Pseudomonadati</taxon>
        <taxon>Pseudomonadota</taxon>
        <taxon>Gammaproteobacteria</taxon>
        <taxon>Moraxellales</taxon>
        <taxon>Moraxellaceae</taxon>
        <taxon>Psychrobacter</taxon>
    </lineage>
</organism>
<evidence type="ECO:0000255" key="1">
    <source>
        <dbReference type="HAMAP-Rule" id="MF_00147"/>
    </source>
</evidence>
<proteinExistence type="inferred from homology"/>
<keyword id="KW-0963">Cytoplasm</keyword>
<keyword id="KW-0312">Gluconeogenesis</keyword>
<keyword id="KW-0324">Glycolysis</keyword>
<keyword id="KW-0413">Isomerase</keyword>
<protein>
    <recommendedName>
        <fullName evidence="1">Triosephosphate isomerase</fullName>
        <shortName evidence="1">TIM</shortName>
        <shortName evidence="1">TPI</shortName>
        <ecNumber evidence="1">5.3.1.1</ecNumber>
    </recommendedName>
    <alternativeName>
        <fullName evidence="1">Triose-phosphate isomerase</fullName>
    </alternativeName>
</protein>
<gene>
    <name evidence="1" type="primary">tpiA</name>
    <name type="ordered locus">PsycPRwf_0152</name>
</gene>
<accession>A5WBS1</accession>
<name>TPIS_PSYWF</name>